<protein>
    <recommendedName>
        <fullName>von Willebrand factor A domain-containing protein DDB_G0292028</fullName>
    </recommendedName>
</protein>
<feature type="chain" id="PRO_0000389208" description="von Willebrand factor A domain-containing protein DDB_G0292028">
    <location>
        <begin position="1"/>
        <end position="932"/>
    </location>
</feature>
<feature type="domain" description="VIT" evidence="2">
    <location>
        <begin position="95"/>
        <end position="222"/>
    </location>
</feature>
<feature type="domain" description="VWFA" evidence="1">
    <location>
        <begin position="342"/>
        <end position="521"/>
    </location>
</feature>
<feature type="region of interest" description="Disordered" evidence="3">
    <location>
        <begin position="1"/>
        <end position="49"/>
    </location>
</feature>
<feature type="region of interest" description="Disordered" evidence="3">
    <location>
        <begin position="661"/>
        <end position="752"/>
    </location>
</feature>
<feature type="region of interest" description="Disordered" evidence="3">
    <location>
        <begin position="800"/>
        <end position="834"/>
    </location>
</feature>
<feature type="compositionally biased region" description="Basic and acidic residues" evidence="3">
    <location>
        <begin position="15"/>
        <end position="39"/>
    </location>
</feature>
<feature type="compositionally biased region" description="Polar residues" evidence="3">
    <location>
        <begin position="677"/>
        <end position="686"/>
    </location>
</feature>
<feature type="compositionally biased region" description="Low complexity" evidence="3">
    <location>
        <begin position="815"/>
        <end position="834"/>
    </location>
</feature>
<reference key="1">
    <citation type="journal article" date="2005" name="Nature">
        <title>The genome of the social amoeba Dictyostelium discoideum.</title>
        <authorList>
            <person name="Eichinger L."/>
            <person name="Pachebat J.A."/>
            <person name="Gloeckner G."/>
            <person name="Rajandream M.A."/>
            <person name="Sucgang R."/>
            <person name="Berriman M."/>
            <person name="Song J."/>
            <person name="Olsen R."/>
            <person name="Szafranski K."/>
            <person name="Xu Q."/>
            <person name="Tunggal B."/>
            <person name="Kummerfeld S."/>
            <person name="Madera M."/>
            <person name="Konfortov B.A."/>
            <person name="Rivero F."/>
            <person name="Bankier A.T."/>
            <person name="Lehmann R."/>
            <person name="Hamlin N."/>
            <person name="Davies R."/>
            <person name="Gaudet P."/>
            <person name="Fey P."/>
            <person name="Pilcher K."/>
            <person name="Chen G."/>
            <person name="Saunders D."/>
            <person name="Sodergren E.J."/>
            <person name="Davis P."/>
            <person name="Kerhornou A."/>
            <person name="Nie X."/>
            <person name="Hall N."/>
            <person name="Anjard C."/>
            <person name="Hemphill L."/>
            <person name="Bason N."/>
            <person name="Farbrother P."/>
            <person name="Desany B."/>
            <person name="Just E."/>
            <person name="Morio T."/>
            <person name="Rost R."/>
            <person name="Churcher C.M."/>
            <person name="Cooper J."/>
            <person name="Haydock S."/>
            <person name="van Driessche N."/>
            <person name="Cronin A."/>
            <person name="Goodhead I."/>
            <person name="Muzny D.M."/>
            <person name="Mourier T."/>
            <person name="Pain A."/>
            <person name="Lu M."/>
            <person name="Harper D."/>
            <person name="Lindsay R."/>
            <person name="Hauser H."/>
            <person name="James K.D."/>
            <person name="Quiles M."/>
            <person name="Madan Babu M."/>
            <person name="Saito T."/>
            <person name="Buchrieser C."/>
            <person name="Wardroper A."/>
            <person name="Felder M."/>
            <person name="Thangavelu M."/>
            <person name="Johnson D."/>
            <person name="Knights A."/>
            <person name="Loulseged H."/>
            <person name="Mungall K.L."/>
            <person name="Oliver K."/>
            <person name="Price C."/>
            <person name="Quail M.A."/>
            <person name="Urushihara H."/>
            <person name="Hernandez J."/>
            <person name="Rabbinowitsch E."/>
            <person name="Steffen D."/>
            <person name="Sanders M."/>
            <person name="Ma J."/>
            <person name="Kohara Y."/>
            <person name="Sharp S."/>
            <person name="Simmonds M.N."/>
            <person name="Spiegler S."/>
            <person name="Tivey A."/>
            <person name="Sugano S."/>
            <person name="White B."/>
            <person name="Walker D."/>
            <person name="Woodward J.R."/>
            <person name="Winckler T."/>
            <person name="Tanaka Y."/>
            <person name="Shaulsky G."/>
            <person name="Schleicher M."/>
            <person name="Weinstock G.M."/>
            <person name="Rosenthal A."/>
            <person name="Cox E.C."/>
            <person name="Chisholm R.L."/>
            <person name="Gibbs R.A."/>
            <person name="Loomis W.F."/>
            <person name="Platzer M."/>
            <person name="Kay R.R."/>
            <person name="Williams J.G."/>
            <person name="Dear P.H."/>
            <person name="Noegel A.A."/>
            <person name="Barrell B.G."/>
            <person name="Kuspa A."/>
        </authorList>
    </citation>
    <scope>NUCLEOTIDE SEQUENCE [LARGE SCALE GENOMIC DNA]</scope>
    <source>
        <strain>AX4</strain>
    </source>
</reference>
<gene>
    <name type="ORF">DDB_G0292028</name>
</gene>
<dbReference type="EMBL" id="AAFI02000187">
    <property type="protein sequence ID" value="EAL61370.1"/>
    <property type="molecule type" value="Genomic_DNA"/>
</dbReference>
<dbReference type="RefSeq" id="XP_629777.1">
    <property type="nucleotide sequence ID" value="XM_629775.1"/>
</dbReference>
<dbReference type="SMR" id="Q54DU5"/>
<dbReference type="FunCoup" id="Q54DU5">
    <property type="interactions" value="6"/>
</dbReference>
<dbReference type="STRING" id="44689.Q54DU5"/>
<dbReference type="GlyGen" id="Q54DU5">
    <property type="glycosylation" value="1 site"/>
</dbReference>
<dbReference type="PaxDb" id="44689-DDB0184172"/>
<dbReference type="EnsemblProtists" id="EAL61370">
    <property type="protein sequence ID" value="EAL61370"/>
    <property type="gene ID" value="DDB_G0292028"/>
</dbReference>
<dbReference type="GeneID" id="8628454"/>
<dbReference type="KEGG" id="ddi:DDB_G0292028"/>
<dbReference type="dictyBase" id="DDB_G0292028"/>
<dbReference type="VEuPathDB" id="AmoebaDB:DDB_G0292028"/>
<dbReference type="eggNOG" id="ENOG502QRPK">
    <property type="taxonomic scope" value="Eukaryota"/>
</dbReference>
<dbReference type="HOGENOM" id="CLU_327738_0_0_1"/>
<dbReference type="InParanoid" id="Q54DU5"/>
<dbReference type="OMA" id="QRAIMTT"/>
<dbReference type="PhylomeDB" id="Q54DU5"/>
<dbReference type="PRO" id="PR:Q54DU5"/>
<dbReference type="Proteomes" id="UP000002195">
    <property type="component" value="Chromosome 6"/>
</dbReference>
<dbReference type="Gene3D" id="3.40.50.410">
    <property type="entry name" value="von Willebrand factor, type A domain"/>
    <property type="match status" value="1"/>
</dbReference>
<dbReference type="InterPro" id="IPR013694">
    <property type="entry name" value="VIT"/>
</dbReference>
<dbReference type="InterPro" id="IPR002035">
    <property type="entry name" value="VWF_A"/>
</dbReference>
<dbReference type="InterPro" id="IPR036465">
    <property type="entry name" value="vWFA_dom_sf"/>
</dbReference>
<dbReference type="PANTHER" id="PTHR45737">
    <property type="entry name" value="VON WILLEBRAND FACTOR A DOMAIN-CONTAINING PROTEIN 5A"/>
    <property type="match status" value="1"/>
</dbReference>
<dbReference type="PANTHER" id="PTHR45737:SF1">
    <property type="entry name" value="VON WILLEBRAND FACTOR A DOMAIN-CONTAINING PROTEIN DDB_G0267758-RELATED"/>
    <property type="match status" value="1"/>
</dbReference>
<dbReference type="Pfam" id="PF08487">
    <property type="entry name" value="VIT"/>
    <property type="match status" value="1"/>
</dbReference>
<dbReference type="Pfam" id="PF13768">
    <property type="entry name" value="VWA_3"/>
    <property type="match status" value="1"/>
</dbReference>
<dbReference type="SMART" id="SM00609">
    <property type="entry name" value="VIT"/>
    <property type="match status" value="1"/>
</dbReference>
<dbReference type="SMART" id="SM00327">
    <property type="entry name" value="VWA"/>
    <property type="match status" value="1"/>
</dbReference>
<dbReference type="SUPFAM" id="SSF53300">
    <property type="entry name" value="vWA-like"/>
    <property type="match status" value="1"/>
</dbReference>
<dbReference type="PROSITE" id="PS51468">
    <property type="entry name" value="VIT"/>
    <property type="match status" value="1"/>
</dbReference>
<dbReference type="PROSITE" id="PS50234">
    <property type="entry name" value="VWFA"/>
    <property type="match status" value="1"/>
</dbReference>
<proteinExistence type="predicted"/>
<name>Y2028_DICDI</name>
<organism>
    <name type="scientific">Dictyostelium discoideum</name>
    <name type="common">Social amoeba</name>
    <dbReference type="NCBI Taxonomy" id="44689"/>
    <lineage>
        <taxon>Eukaryota</taxon>
        <taxon>Amoebozoa</taxon>
        <taxon>Evosea</taxon>
        <taxon>Eumycetozoa</taxon>
        <taxon>Dictyostelia</taxon>
        <taxon>Dictyosteliales</taxon>
        <taxon>Dictyosteliaceae</taxon>
        <taxon>Dictyostelium</taxon>
    </lineage>
</organism>
<accession>Q54DU5</accession>
<keyword id="KW-1185">Reference proteome</keyword>
<evidence type="ECO:0000255" key="1">
    <source>
        <dbReference type="PROSITE-ProRule" id="PRU00219"/>
    </source>
</evidence>
<evidence type="ECO:0000255" key="2">
    <source>
        <dbReference type="PROSITE-ProRule" id="PRU00801"/>
    </source>
</evidence>
<evidence type="ECO:0000256" key="3">
    <source>
        <dbReference type="SAM" id="MobiDB-lite"/>
    </source>
</evidence>
<sequence length="932" mass="103712">MNFIKKVIGGGSSKSKTDIKIEDEQHEQQHEQQHEKQQIPDKISTSKVNSPCVPPTCTYISKENVRSDLSLIKDFNSAYYYNYYRTLEKNSTNLLTSPGLNTKVVSNQFTLKEFNIVSEMTDSCIVSVWTQKYSNLSLTPVEAVYQIPLAPYATVSDFSVILKDKVLKGKIKENEKAKEKYNDAIASGGQAFLAEKVEGFFKLQIGNLPPQEDVTVNITITSEIGTHLESLHFCLHRFIFPKSAFKFNYTLNASLSTPIETIEMDHFQPTITYKDESKTNATVTISTENGVSNNIIAIIVPKYSEKPESFIEYSPIDKSYALAINFYPKFSVGLDEVDQKSEFIFVLDCSGSMSGKPIEKSKMALEICMRSLNENSKFNIVCFGSNFNKLFETSKHYNDETLQKASEYINRIDANLGGTELLEPIVDILSKESDPEFPRQVFILTDGEISNRDKLIDYVGKEANTTRIFTYGIGSYVDKELIVGVSKACKGYYEMIVDNSDMEEKVMKLISIAMQPTLSNIKVDWGVLSNVVQSPAQIRPLFNQERMMIYATLDKEPTEKQVTVILSGNGPLSERISFPVDLDFSKANQSTSHIHTLSAFKHIQDLEESERKEKKDNKDKIVKLGKRFGLVSKHTSYIVTADSDKVTEETMKTVQVLEPTQQINTSPGSGSGFIPTTRVQGSSSVFPSSPTPLSGPSPYTVCAPPPPPPTSSPYTNCAPPPPQFSRCIAPQPYQSAPAPPAPPAPSRLSQAQSQMDYCDQELLCESLEGDLLVEEEELECKEIECSPPQKLSYITPFAPTSQISQSSRECRSKKSSSPTIQKSSSLPSRPSTSSSSLIEIIRQQKANGSFTKSSVSSFINVDTPPPSSDIPEDVWTTLLIIANFILNFDSQKSQWELVSQKATKFVKQQIIKSSIASTFETLLESAKKSISN</sequence>